<keyword id="KW-0067">ATP-binding</keyword>
<keyword id="KW-0547">Nucleotide-binding</keyword>
<keyword id="KW-1185">Reference proteome</keyword>
<keyword id="KW-0843">Virulence</keyword>
<comment type="function">
    <text evidence="2">The virB operon is essential for intracellular survival and is not involved in the invasion process. Constitutes a major determinant of virulence in mice.</text>
</comment>
<comment type="miscellaneous">
    <text>Transcription is turned on at the beginning of the stationary phase of vegetative growth.</text>
</comment>
<comment type="similarity">
    <text evidence="3">Belongs to the TrbE/VirB4 family.</text>
</comment>
<reference key="1">
    <citation type="journal article" date="2000" name="J. Bacteriol.">
        <title>A homologue of an operon required for DNA transfer in Agrobacterium is required in Brucella abortus for virulence and intracellular multiplication.</title>
        <authorList>
            <person name="Sieira R."/>
            <person name="Comerci D.J."/>
            <person name="Sanchez D.O."/>
            <person name="Ugalde R.A."/>
        </authorList>
    </citation>
    <scope>NUCLEOTIDE SEQUENCE [GENOMIC DNA]</scope>
    <scope>TRANSCRIPTION</scope>
    <scope>FUNCTION</scope>
</reference>
<reference key="2">
    <citation type="journal article" date="2005" name="Infect. Immun.">
        <title>Whole-genome analyses of speciation events in pathogenic Brucellae.</title>
        <authorList>
            <person name="Chain P.S."/>
            <person name="Comerci D.J."/>
            <person name="Tolmasky M.E."/>
            <person name="Larimer F.W."/>
            <person name="Malfatti S.A."/>
            <person name="Vergez L.M."/>
            <person name="Aguero F."/>
            <person name="Land M.L."/>
            <person name="Ugalde R.A."/>
            <person name="Garcia E."/>
        </authorList>
    </citation>
    <scope>NUCLEOTIDE SEQUENCE [LARGE SCALE GENOMIC DNA]</scope>
    <source>
        <strain>2308</strain>
    </source>
</reference>
<evidence type="ECO:0000255" key="1"/>
<evidence type="ECO:0000269" key="2">
    <source>
    </source>
</evidence>
<evidence type="ECO:0000305" key="3"/>
<gene>
    <name type="primary">virB4</name>
    <name type="ordered locus">BAB2_0065</name>
</gene>
<organism>
    <name type="scientific">Brucella abortus (strain 2308)</name>
    <dbReference type="NCBI Taxonomy" id="359391"/>
    <lineage>
        <taxon>Bacteria</taxon>
        <taxon>Pseudomonadati</taxon>
        <taxon>Pseudomonadota</taxon>
        <taxon>Alphaproteobacteria</taxon>
        <taxon>Hyphomicrobiales</taxon>
        <taxon>Brucellaceae</taxon>
        <taxon>Brucella/Ochrobactrum group</taxon>
        <taxon>Brucella</taxon>
    </lineage>
</organism>
<accession>Q2YIT8</accession>
<accession>Q57A17</accession>
<accession>Q9KIS9</accession>
<feature type="chain" id="PRO_0000290168" description="Type IV secretion system protein virB4">
    <location>
        <begin position="1"/>
        <end position="831"/>
    </location>
</feature>
<feature type="binding site" evidence="1">
    <location>
        <begin position="457"/>
        <end position="464"/>
    </location>
    <ligand>
        <name>ATP</name>
        <dbReference type="ChEBI" id="CHEBI:30616"/>
    </ligand>
</feature>
<sequence length="831" mass="94572">MGAQSKYAQQLNNERSLAPFIPFRSQVGPTTVITRDGDFVRTWRIAGLAFETQDKEKLLIRKDQLNTLFRAIASNNVALWSHNVRRRTWDHLKSFFSNPFCDALDKKYYGSFSGYRMMSNELYLTVIYRPVPAKISRLFNVAVHRSHAEILQEQQLAIRKLDEIGNQIETSLRRYGGDDGRGIEVLSTYEDKHGALCSQQLEFYNFLLSGEWQKVRVPSCPLDEYLGTGWVYAGTETIEIRTANATRYARGIDFKDYANHTEPGILNGLMYSDYEYVITQSFSFMTKRDGKEFLTRQKQRLQNTEDGSASQIMEMDIAIDQLGRGDFVMGEYHYSLLVFAEDMETVRHNTSHAMNILQDNGFLATVIATATDAAFYAQLPCNWRYRPRVAGLTSLNFAGLSCFHNFRAGKRDGNPWGQALTLLKTPSGQPAYLNFHYSKGDEDNFDKKLLGNTRIIGQSGAGKTVLMNFCLAQAQKYLHNAPMGMCNVFFDKDQGAKGTILAIGGKYLAIRNGEPTGFNPFQMEPTAGNILFLEKLVQVLVSRDGQHVTTTDESRISHAIRTVMRMRPELRRLSTVLQNVTEGSDRQDRENSVAKRLAKWCFDDGTGKRGTFWWVLDCPQDQIDFNTHSNYGFDGTDFLDNADVRTPISMYLLHRMELAIDGRRFIYWMDEAWKWVDDEAFSEFANNKQLTIRKQNGLGVFATQMPSSLLNSKVASALVQQVATEIYLPNPKADYHEYTDGFKVTNEEFDIIRSMSEESRMFLVKQGHHSMICRLELNGFDDELAILSGSSDNNELLDQVIAEVGDDPSVWLPVFQERRKARIASSKSTGR</sequence>
<name>VIRB4_BRUA2</name>
<dbReference type="EMBL" id="AF226278">
    <property type="protein sequence ID" value="AAF73897.1"/>
    <property type="molecule type" value="Genomic_DNA"/>
</dbReference>
<dbReference type="EMBL" id="AM040265">
    <property type="protein sequence ID" value="CAJ12231.1"/>
    <property type="molecule type" value="Genomic_DNA"/>
</dbReference>
<dbReference type="RefSeq" id="WP_002966513.1">
    <property type="nucleotide sequence ID" value="NZ_KN046823.1"/>
</dbReference>
<dbReference type="SMR" id="Q2YIT8"/>
<dbReference type="STRING" id="359391.BAB2_0065"/>
<dbReference type="KEGG" id="bmf:BAB2_0065"/>
<dbReference type="PATRIC" id="fig|359391.11.peg.2012"/>
<dbReference type="HOGENOM" id="CLU_008341_3_0_5"/>
<dbReference type="PhylomeDB" id="Q2YIT8"/>
<dbReference type="BioCyc" id="MetaCyc:BAB_RS26670-MONOMER"/>
<dbReference type="Proteomes" id="UP000002719">
    <property type="component" value="Chromosome II"/>
</dbReference>
<dbReference type="GO" id="GO:0005524">
    <property type="term" value="F:ATP binding"/>
    <property type="evidence" value="ECO:0007669"/>
    <property type="project" value="UniProtKB-KW"/>
</dbReference>
<dbReference type="Gene3D" id="3.40.50.300">
    <property type="entry name" value="P-loop containing nucleotide triphosphate hydrolases"/>
    <property type="match status" value="1"/>
</dbReference>
<dbReference type="InterPro" id="IPR004346">
    <property type="entry name" value="CagE_TrbE_VirB"/>
</dbReference>
<dbReference type="InterPro" id="IPR018145">
    <property type="entry name" value="CagE_TrbE_VirB_cntrl_dom"/>
</dbReference>
<dbReference type="InterPro" id="IPR027417">
    <property type="entry name" value="P-loop_NTPase"/>
</dbReference>
<dbReference type="InterPro" id="IPR043964">
    <property type="entry name" value="P-loop_TraG"/>
</dbReference>
<dbReference type="InterPro" id="IPR051162">
    <property type="entry name" value="T4SS_component"/>
</dbReference>
<dbReference type="NCBIfam" id="TIGR00929">
    <property type="entry name" value="VirB4_CagE"/>
    <property type="match status" value="1"/>
</dbReference>
<dbReference type="PANTHER" id="PTHR30121:SF12">
    <property type="entry name" value="TYPE IV SECRETION SYSTEM PROTEIN CAGE"/>
    <property type="match status" value="1"/>
</dbReference>
<dbReference type="PANTHER" id="PTHR30121">
    <property type="entry name" value="UNCHARACTERIZED PROTEIN YJGR-RELATED"/>
    <property type="match status" value="1"/>
</dbReference>
<dbReference type="Pfam" id="PF03135">
    <property type="entry name" value="CagE_TrbE_VirB"/>
    <property type="match status" value="1"/>
</dbReference>
<dbReference type="Pfam" id="PF19044">
    <property type="entry name" value="P-loop_TraG"/>
    <property type="match status" value="1"/>
</dbReference>
<dbReference type="SUPFAM" id="SSF52540">
    <property type="entry name" value="P-loop containing nucleoside triphosphate hydrolases"/>
    <property type="match status" value="1"/>
</dbReference>
<proteinExistence type="inferred from homology"/>
<protein>
    <recommendedName>
        <fullName>Type IV secretion system protein virB4</fullName>
    </recommendedName>
</protein>